<organism>
    <name type="scientific">Psittacid herpesvirus 1 (isolate Amazon parrot/-/97-0001/1997)</name>
    <name type="common">PsHV-1</name>
    <name type="synonym">Pacheco's disease virus</name>
    <dbReference type="NCBI Taxonomy" id="670426"/>
    <lineage>
        <taxon>Viruses</taxon>
        <taxon>Duplodnaviria</taxon>
        <taxon>Heunggongvirae</taxon>
        <taxon>Peploviricota</taxon>
        <taxon>Herviviricetes</taxon>
        <taxon>Herpesvirales</taxon>
        <taxon>Orthoherpesviridae</taxon>
        <taxon>Alphaherpesvirinae</taxon>
        <taxon>Iltovirus</taxon>
        <taxon>Iltovirus psittacidalpha1</taxon>
        <taxon>Psittacid alphaherpesvirus 1</taxon>
    </lineage>
</organism>
<evidence type="ECO:0000250" key="1">
    <source>
        <dbReference type="UniProtKB" id="P10186"/>
    </source>
</evidence>
<evidence type="ECO:0000256" key="2">
    <source>
        <dbReference type="SAM" id="MobiDB-lite"/>
    </source>
</evidence>
<name>UNG_PSHV1</name>
<sequence length="362" mass="39874">MANDERVATGEDRAWGRLGVAELRIDAASVAPNDPTEDREVVLPIPGPAVSPIPRLTQPPRSSPPRPDAPSDLPRAQREPTKRSPATAGPTEDPNFADKIFKQAAPARKKPRFMPPPKLICGGVTDVTAELPAPSWDRVAEEFGIPDSWKNILAPLVETQRFAKTLQSYNGAKKSGNVLPSQDQIFAWARYCAPHEVKVIIVGQDPYPTEGDAHGLAFSVPVGRRVPPSLRRVFAALKDCYGDGFPTPSSGSLIAWAKQGVLLLNRHLTVERGLPRSHVSMGWDKLTFGVIKTLANDNPRMAVMLWGYDAKTFVPKLPSKHLRLEYSHPSTSTRRPFDCRHFIEANKFLEEGGLQAVVWRLP</sequence>
<protein>
    <recommendedName>
        <fullName evidence="1">Uracil-DNA glycosylase</fullName>
        <shortName evidence="1">UDG</shortName>
        <ecNumber evidence="1">3.2.2.27</ecNumber>
    </recommendedName>
    <alternativeName>
        <fullName evidence="1">UNG</fullName>
    </alternativeName>
</protein>
<dbReference type="EC" id="3.2.2.27" evidence="1"/>
<dbReference type="EMBL" id="AY372243">
    <property type="protein sequence ID" value="AAQ73744.1"/>
    <property type="molecule type" value="Genomic_DNA"/>
</dbReference>
<dbReference type="RefSeq" id="NP_944438.1">
    <property type="nucleotide sequence ID" value="NC_005264.1"/>
</dbReference>
<dbReference type="SMR" id="Q6UDG6"/>
<dbReference type="GeneID" id="2656983"/>
<dbReference type="KEGG" id="vg:2656983"/>
<dbReference type="Proteomes" id="UP000006840">
    <property type="component" value="Segment"/>
</dbReference>
<dbReference type="GO" id="GO:0042025">
    <property type="term" value="C:host cell nucleus"/>
    <property type="evidence" value="ECO:0007669"/>
    <property type="project" value="UniProtKB-SubCell"/>
</dbReference>
<dbReference type="GO" id="GO:0004844">
    <property type="term" value="F:uracil DNA N-glycosylase activity"/>
    <property type="evidence" value="ECO:0007669"/>
    <property type="project" value="UniProtKB-EC"/>
</dbReference>
<dbReference type="GO" id="GO:0097510">
    <property type="term" value="P:base-excision repair, AP site formation via deaminated base removal"/>
    <property type="evidence" value="ECO:0007669"/>
    <property type="project" value="TreeGrafter"/>
</dbReference>
<dbReference type="CDD" id="cd10027">
    <property type="entry name" value="UDG-F1-like"/>
    <property type="match status" value="1"/>
</dbReference>
<dbReference type="Gene3D" id="3.40.470.10">
    <property type="entry name" value="Uracil-DNA glycosylase-like domain"/>
    <property type="match status" value="1"/>
</dbReference>
<dbReference type="InterPro" id="IPR002043">
    <property type="entry name" value="UDG_fam1"/>
</dbReference>
<dbReference type="InterPro" id="IPR018085">
    <property type="entry name" value="Ura-DNA_Glyclase_AS"/>
</dbReference>
<dbReference type="InterPro" id="IPR005122">
    <property type="entry name" value="Uracil-DNA_glycosylase-like"/>
</dbReference>
<dbReference type="InterPro" id="IPR036895">
    <property type="entry name" value="Uracil-DNA_glycosylase-like_sf"/>
</dbReference>
<dbReference type="NCBIfam" id="NF003588">
    <property type="entry name" value="PRK05254.1-1"/>
    <property type="match status" value="1"/>
</dbReference>
<dbReference type="NCBIfam" id="NF003592">
    <property type="entry name" value="PRK05254.1-5"/>
    <property type="match status" value="1"/>
</dbReference>
<dbReference type="NCBIfam" id="TIGR00628">
    <property type="entry name" value="ung"/>
    <property type="match status" value="1"/>
</dbReference>
<dbReference type="PANTHER" id="PTHR11264">
    <property type="entry name" value="URACIL-DNA GLYCOSYLASE"/>
    <property type="match status" value="1"/>
</dbReference>
<dbReference type="PANTHER" id="PTHR11264:SF0">
    <property type="entry name" value="URACIL-DNA GLYCOSYLASE"/>
    <property type="match status" value="1"/>
</dbReference>
<dbReference type="Pfam" id="PF03167">
    <property type="entry name" value="UDG"/>
    <property type="match status" value="1"/>
</dbReference>
<dbReference type="SMART" id="SM00986">
    <property type="entry name" value="UDG"/>
    <property type="match status" value="1"/>
</dbReference>
<dbReference type="SMART" id="SM00987">
    <property type="entry name" value="UreE_C"/>
    <property type="match status" value="1"/>
</dbReference>
<dbReference type="SUPFAM" id="SSF52141">
    <property type="entry name" value="Uracil-DNA glycosylase-like"/>
    <property type="match status" value="1"/>
</dbReference>
<dbReference type="PROSITE" id="PS00130">
    <property type="entry name" value="U_DNA_GLYCOSYLASE"/>
    <property type="match status" value="1"/>
</dbReference>
<accession>Q6UDG6</accession>
<feature type="chain" id="PRO_0000406809" description="Uracil-DNA glycosylase">
    <location>
        <begin position="1"/>
        <end position="362"/>
    </location>
</feature>
<feature type="region of interest" description="Disordered" evidence="2">
    <location>
        <begin position="28"/>
        <end position="97"/>
    </location>
</feature>
<feature type="active site" description="Proton acceptor" evidence="1">
    <location>
        <position position="205"/>
    </location>
</feature>
<keyword id="KW-0227">DNA damage</keyword>
<keyword id="KW-0234">DNA repair</keyword>
<keyword id="KW-1048">Host nucleus</keyword>
<keyword id="KW-0378">Hydrolase</keyword>
<keyword id="KW-1185">Reference proteome</keyword>
<organismHost>
    <name type="scientific">Amazona oratrix</name>
    <name type="common">yellow-headed parrot</name>
    <dbReference type="NCBI Taxonomy" id="152276"/>
</organismHost>
<proteinExistence type="inferred from homology"/>
<gene>
    <name type="primary">UL2</name>
</gene>
<comment type="function">
    <text evidence="1">Excises uracil residues from the DNA which can arise as a result of misincorporation of dUMP residues by DNA polymerase or deamination of cytosines. Therefore may reduce deleterious uracil incorporation into the viral genome, particularly in terminally differentiated cells which lack DNA repair enzymes.</text>
</comment>
<comment type="catalytic activity">
    <reaction evidence="1">
        <text>Hydrolyzes single-stranded DNA or mismatched double-stranded DNA and polynucleotides, releasing free uracil.</text>
        <dbReference type="EC" id="3.2.2.27"/>
    </reaction>
</comment>
<comment type="subcellular location">
    <subcellularLocation>
        <location evidence="1">Host nucleus</location>
    </subcellularLocation>
</comment>
<comment type="similarity">
    <text evidence="1">Belongs to the uracil-DNA glycosylase (UDG) superfamily. UNG family.</text>
</comment>
<reference key="1">
    <citation type="journal article" date="2006" name="J. Virol.">
        <title>Psittacid herpesvirus 1 and infectious laryngotracheitis virus: Comparative genome sequence analysis of two avian alphaherpesviruses.</title>
        <authorList>
            <person name="Thureen D.R."/>
            <person name="Keeler C.L. Jr."/>
        </authorList>
    </citation>
    <scope>NUCLEOTIDE SEQUENCE [LARGE SCALE GENOMIC DNA]</scope>
</reference>